<keyword id="KW-0413">Isomerase</keyword>
<keyword id="KW-0423">Lactose metabolism</keyword>
<keyword id="KW-1185">Reference proteome</keyword>
<gene>
    <name evidence="1" type="primary">lacA</name>
    <name type="ordered locus">SAG1931</name>
</gene>
<reference key="1">
    <citation type="journal article" date="2002" name="Proc. Natl. Acad. Sci. U.S.A.">
        <title>Complete genome sequence and comparative genomic analysis of an emerging human pathogen, serotype V Streptococcus agalactiae.</title>
        <authorList>
            <person name="Tettelin H."/>
            <person name="Masignani V."/>
            <person name="Cieslewicz M.J."/>
            <person name="Eisen J.A."/>
            <person name="Peterson S.N."/>
            <person name="Wessels M.R."/>
            <person name="Paulsen I.T."/>
            <person name="Nelson K.E."/>
            <person name="Margarit I."/>
            <person name="Read T.D."/>
            <person name="Madoff L.C."/>
            <person name="Wolf A.M."/>
            <person name="Beanan M.J."/>
            <person name="Brinkac L.M."/>
            <person name="Daugherty S.C."/>
            <person name="DeBoy R.T."/>
            <person name="Durkin A.S."/>
            <person name="Kolonay J.F."/>
            <person name="Madupu R."/>
            <person name="Lewis M.R."/>
            <person name="Radune D."/>
            <person name="Fedorova N.B."/>
            <person name="Scanlan D."/>
            <person name="Khouri H.M."/>
            <person name="Mulligan S."/>
            <person name="Carty H.A."/>
            <person name="Cline R.T."/>
            <person name="Van Aken S.E."/>
            <person name="Gill J."/>
            <person name="Scarselli M."/>
            <person name="Mora M."/>
            <person name="Iacobini E.T."/>
            <person name="Brettoni C."/>
            <person name="Galli G."/>
            <person name="Mariani M."/>
            <person name="Vegni F."/>
            <person name="Maione D."/>
            <person name="Rinaudo D."/>
            <person name="Rappuoli R."/>
            <person name="Telford J.L."/>
            <person name="Kasper D.L."/>
            <person name="Grandi G."/>
            <person name="Fraser C.M."/>
        </authorList>
    </citation>
    <scope>NUCLEOTIDE SEQUENCE [LARGE SCALE GENOMIC DNA]</scope>
    <source>
        <strain>ATCC BAA-611 / 2603 V/R</strain>
    </source>
</reference>
<evidence type="ECO:0000255" key="1">
    <source>
        <dbReference type="HAMAP-Rule" id="MF_01555"/>
    </source>
</evidence>
<accession>Q8DXC0</accession>
<name>LACA_STRA5</name>
<comment type="catalytic activity">
    <reaction evidence="1">
        <text>aldehydo-D-galactose 6-phosphate = keto-D-tagatose 6-phosphate</text>
        <dbReference type="Rhea" id="RHEA:13033"/>
        <dbReference type="ChEBI" id="CHEBI:58255"/>
        <dbReference type="ChEBI" id="CHEBI:134283"/>
        <dbReference type="EC" id="5.3.1.26"/>
    </reaction>
</comment>
<comment type="pathway">
    <text evidence="1">Carbohydrate metabolism; D-galactose 6-phosphate degradation; D-tagatose 6-phosphate from D-galactose 6-phosphate: step 1/1.</text>
</comment>
<comment type="subunit">
    <text evidence="1">Heteromultimeric protein consisting of LacA and LacB.</text>
</comment>
<comment type="similarity">
    <text evidence="1">Belongs to the LacAB/RpiB family.</text>
</comment>
<protein>
    <recommendedName>
        <fullName evidence="1">Galactose-6-phosphate isomerase subunit LacA</fullName>
        <ecNumber evidence="1">5.3.1.26</ecNumber>
    </recommendedName>
</protein>
<feature type="chain" id="PRO_0000208118" description="Galactose-6-phosphate isomerase subunit LacA">
    <location>
        <begin position="1"/>
        <end position="141"/>
    </location>
</feature>
<organism>
    <name type="scientific">Streptococcus agalactiae serotype V (strain ATCC BAA-611 / 2603 V/R)</name>
    <dbReference type="NCBI Taxonomy" id="208435"/>
    <lineage>
        <taxon>Bacteria</taxon>
        <taxon>Bacillati</taxon>
        <taxon>Bacillota</taxon>
        <taxon>Bacilli</taxon>
        <taxon>Lactobacillales</taxon>
        <taxon>Streptococcaceae</taxon>
        <taxon>Streptococcus</taxon>
    </lineage>
</organism>
<proteinExistence type="inferred from homology"/>
<dbReference type="EC" id="5.3.1.26" evidence="1"/>
<dbReference type="EMBL" id="AE009948">
    <property type="protein sequence ID" value="AAN00793.1"/>
    <property type="molecule type" value="Genomic_DNA"/>
</dbReference>
<dbReference type="RefSeq" id="NP_688920.1">
    <property type="nucleotide sequence ID" value="NC_004116.1"/>
</dbReference>
<dbReference type="RefSeq" id="WP_000152527.1">
    <property type="nucleotide sequence ID" value="NC_004116.1"/>
</dbReference>
<dbReference type="SMR" id="Q8DXC0"/>
<dbReference type="STRING" id="208435.SAG1931"/>
<dbReference type="KEGG" id="sag:SAG1931"/>
<dbReference type="PATRIC" id="fig|208435.3.peg.1936"/>
<dbReference type="HOGENOM" id="CLU_091396_4_2_9"/>
<dbReference type="OrthoDB" id="1778624at2"/>
<dbReference type="UniPathway" id="UPA00702">
    <property type="reaction ID" value="UER00714"/>
</dbReference>
<dbReference type="Proteomes" id="UP000000821">
    <property type="component" value="Chromosome"/>
</dbReference>
<dbReference type="GO" id="GO:0050044">
    <property type="term" value="F:galactose-6-phosphate isomerase activity"/>
    <property type="evidence" value="ECO:0007669"/>
    <property type="project" value="UniProtKB-UniRule"/>
</dbReference>
<dbReference type="GO" id="GO:0004751">
    <property type="term" value="F:ribose-5-phosphate isomerase activity"/>
    <property type="evidence" value="ECO:0007669"/>
    <property type="project" value="TreeGrafter"/>
</dbReference>
<dbReference type="GO" id="GO:0019316">
    <property type="term" value="P:D-allose catabolic process"/>
    <property type="evidence" value="ECO:0007669"/>
    <property type="project" value="TreeGrafter"/>
</dbReference>
<dbReference type="GO" id="GO:0019388">
    <property type="term" value="P:galactose catabolic process"/>
    <property type="evidence" value="ECO:0007669"/>
    <property type="project" value="UniProtKB-UniPathway"/>
</dbReference>
<dbReference type="GO" id="GO:0019512">
    <property type="term" value="P:lactose catabolic process via tagatose-6-phosphate"/>
    <property type="evidence" value="ECO:0007669"/>
    <property type="project" value="UniProtKB-UniRule"/>
</dbReference>
<dbReference type="GO" id="GO:0009052">
    <property type="term" value="P:pentose-phosphate shunt, non-oxidative branch"/>
    <property type="evidence" value="ECO:0007669"/>
    <property type="project" value="TreeGrafter"/>
</dbReference>
<dbReference type="Gene3D" id="3.40.1400.10">
    <property type="entry name" value="Sugar-phosphate isomerase, RpiB/LacA/LacB"/>
    <property type="match status" value="1"/>
</dbReference>
<dbReference type="HAMAP" id="MF_01555">
    <property type="entry name" value="LacA"/>
    <property type="match status" value="1"/>
</dbReference>
<dbReference type="InterPro" id="IPR004783">
    <property type="entry name" value="LacA"/>
</dbReference>
<dbReference type="InterPro" id="IPR003500">
    <property type="entry name" value="RpiB_LacA_LacB"/>
</dbReference>
<dbReference type="InterPro" id="IPR036569">
    <property type="entry name" value="RpiB_LacA_LacB_sf"/>
</dbReference>
<dbReference type="NCBIfam" id="TIGR01118">
    <property type="entry name" value="lacA"/>
    <property type="match status" value="1"/>
</dbReference>
<dbReference type="NCBIfam" id="NF006380">
    <property type="entry name" value="PRK08621.1"/>
    <property type="match status" value="1"/>
</dbReference>
<dbReference type="NCBIfam" id="TIGR00689">
    <property type="entry name" value="rpiB_lacA_lacB"/>
    <property type="match status" value="1"/>
</dbReference>
<dbReference type="PANTHER" id="PTHR30345:SF5">
    <property type="entry name" value="GALACTOSE-6-PHOSPHATE ISOMERASE SUBUNIT LACA"/>
    <property type="match status" value="1"/>
</dbReference>
<dbReference type="PANTHER" id="PTHR30345">
    <property type="entry name" value="RIBOSE-5-PHOSPHATE ISOMERASE B"/>
    <property type="match status" value="1"/>
</dbReference>
<dbReference type="Pfam" id="PF02502">
    <property type="entry name" value="LacAB_rpiB"/>
    <property type="match status" value="1"/>
</dbReference>
<dbReference type="PIRSF" id="PIRSF005384">
    <property type="entry name" value="RpiB_LacA_B"/>
    <property type="match status" value="1"/>
</dbReference>
<dbReference type="SUPFAM" id="SSF89623">
    <property type="entry name" value="Ribose/Galactose isomerase RpiB/AlsB"/>
    <property type="match status" value="1"/>
</dbReference>
<sequence>MTIIIGADAHGVELKEVIRQHLTSLGKEIIDLTDTSKDFVDNTLAIVAKVNQKEDNLGIMVDAYGVGPFMVATKVKGMIAAEVSDERSAYMTRAHNNARMITLGSEIVGPGVAKHIVEGFVDGTYDAGRHQIRVDMLNKMC</sequence>